<comment type="function">
    <text evidence="1">RuBisCO catalyzes two reactions: the carboxylation of D-ribulose 1,5-bisphosphate, the primary event in carbon dioxide fixation, as well as the oxidative fragmentation of the pentose substrate in the photorespiration process. Both reactions occur simultaneously and in competition at the same active site.</text>
</comment>
<comment type="catalytic activity">
    <reaction evidence="1">
        <text>2 (2R)-3-phosphoglycerate + 2 H(+) = D-ribulose 1,5-bisphosphate + CO2 + H2O</text>
        <dbReference type="Rhea" id="RHEA:23124"/>
        <dbReference type="ChEBI" id="CHEBI:15377"/>
        <dbReference type="ChEBI" id="CHEBI:15378"/>
        <dbReference type="ChEBI" id="CHEBI:16526"/>
        <dbReference type="ChEBI" id="CHEBI:57870"/>
        <dbReference type="ChEBI" id="CHEBI:58272"/>
        <dbReference type="EC" id="4.1.1.39"/>
    </reaction>
</comment>
<comment type="catalytic activity">
    <reaction evidence="1">
        <text>D-ribulose 1,5-bisphosphate + O2 = 2-phosphoglycolate + (2R)-3-phosphoglycerate + 2 H(+)</text>
        <dbReference type="Rhea" id="RHEA:36631"/>
        <dbReference type="ChEBI" id="CHEBI:15378"/>
        <dbReference type="ChEBI" id="CHEBI:15379"/>
        <dbReference type="ChEBI" id="CHEBI:57870"/>
        <dbReference type="ChEBI" id="CHEBI:58033"/>
        <dbReference type="ChEBI" id="CHEBI:58272"/>
    </reaction>
</comment>
<comment type="cofactor">
    <cofactor evidence="1">
        <name>Mg(2+)</name>
        <dbReference type="ChEBI" id="CHEBI:18420"/>
    </cofactor>
    <text evidence="1">Binds 1 Mg(2+) ion per subunit.</text>
</comment>
<comment type="subunit">
    <text evidence="1">Heterohexadecamer of 8 large chains and 8 small chains; disulfide-linked. The disulfide link is formed within the large subunit homodimers.</text>
</comment>
<comment type="subcellular location">
    <subcellularLocation>
        <location>Plastid</location>
        <location>Chloroplast</location>
    </subcellularLocation>
</comment>
<comment type="PTM">
    <text evidence="1">The disulfide bond which can form in the large chain dimeric partners within the hexadecamer appears to be associated with oxidative stress and protein turnover.</text>
</comment>
<comment type="miscellaneous">
    <text evidence="1">The basic functional RuBisCO is composed of a large chain homodimer in a 'head-to-tail' conformation. In form I RuBisCO this homodimer is arranged in a barrel-like tetramer with the small subunits forming a tetrameric 'cap' on each end of the 'barrel'.</text>
</comment>
<comment type="similarity">
    <text evidence="1">Belongs to the RuBisCO large chain family. Type I subfamily.</text>
</comment>
<accession>P28416</accession>
<feature type="chain" id="PRO_0000062477" description="Ribulose bisphosphate carboxylase large chain">
    <location>
        <begin position="1" status="less than"/>
        <end position="459" status="greater than"/>
    </location>
</feature>
<feature type="active site" description="Proton acceptor" evidence="1">
    <location>
        <position position="165"/>
    </location>
</feature>
<feature type="active site" description="Proton acceptor" evidence="1">
    <location>
        <position position="284"/>
    </location>
</feature>
<feature type="binding site" description="in homodimeric partner" evidence="1">
    <location>
        <position position="113"/>
    </location>
    <ligand>
        <name>substrate</name>
    </ligand>
</feature>
<feature type="binding site" evidence="1">
    <location>
        <position position="163"/>
    </location>
    <ligand>
        <name>substrate</name>
    </ligand>
</feature>
<feature type="binding site" evidence="1">
    <location>
        <position position="167"/>
    </location>
    <ligand>
        <name>substrate</name>
    </ligand>
</feature>
<feature type="binding site" description="via carbamate group" evidence="1">
    <location>
        <position position="191"/>
    </location>
    <ligand>
        <name>Mg(2+)</name>
        <dbReference type="ChEBI" id="CHEBI:18420"/>
    </ligand>
</feature>
<feature type="binding site" evidence="1">
    <location>
        <position position="193"/>
    </location>
    <ligand>
        <name>Mg(2+)</name>
        <dbReference type="ChEBI" id="CHEBI:18420"/>
    </ligand>
</feature>
<feature type="binding site" evidence="1">
    <location>
        <position position="194"/>
    </location>
    <ligand>
        <name>Mg(2+)</name>
        <dbReference type="ChEBI" id="CHEBI:18420"/>
    </ligand>
</feature>
<feature type="binding site" evidence="1">
    <location>
        <position position="285"/>
    </location>
    <ligand>
        <name>substrate</name>
    </ligand>
</feature>
<feature type="binding site" evidence="1">
    <location>
        <position position="317"/>
    </location>
    <ligand>
        <name>substrate</name>
    </ligand>
</feature>
<feature type="binding site" evidence="1">
    <location>
        <position position="369"/>
    </location>
    <ligand>
        <name>substrate</name>
    </ligand>
</feature>
<feature type="site" description="Transition state stabilizer" evidence="1">
    <location>
        <position position="324"/>
    </location>
</feature>
<feature type="modified residue" description="N6,N6,N6-trimethyllysine" evidence="1">
    <location>
        <position position="4"/>
    </location>
</feature>
<feature type="modified residue" description="N6-carboxylysine" evidence="1">
    <location>
        <position position="191"/>
    </location>
</feature>
<feature type="disulfide bond" description="Interchain; in linked form" evidence="1">
    <location>
        <position position="237"/>
    </location>
</feature>
<feature type="non-terminal residue">
    <location>
        <position position="1"/>
    </location>
</feature>
<feature type="non-terminal residue">
    <location>
        <position position="459"/>
    </location>
</feature>
<keyword id="KW-0113">Calvin cycle</keyword>
<keyword id="KW-0120">Carbon dioxide fixation</keyword>
<keyword id="KW-0150">Chloroplast</keyword>
<keyword id="KW-1015">Disulfide bond</keyword>
<keyword id="KW-0456">Lyase</keyword>
<keyword id="KW-0460">Magnesium</keyword>
<keyword id="KW-0479">Metal-binding</keyword>
<keyword id="KW-0488">Methylation</keyword>
<keyword id="KW-0503">Monooxygenase</keyword>
<keyword id="KW-0560">Oxidoreductase</keyword>
<keyword id="KW-0601">Photorespiration</keyword>
<keyword id="KW-0602">Photosynthesis</keyword>
<keyword id="KW-0934">Plastid</keyword>
<geneLocation type="chloroplast"/>
<sequence>VGFKAGVKDYKLTYYTPDYETKDTDILAAFRVTPQPGVPPEEAGAAVAAESSTGTWTTVWTDGLTSLDRYKGRCYHIEPVVGEENQYIAYVAYPLDLFEEGSVTNMFTSIVGNVFGFKALRALRLEDLRIPVAYVKTFQGPPHGIQVERDKLNKYGRPLLGCTIKPKLGLSAKNYGRAVYECLRGGLDFTKDDENVNSQPFMRWRDRFLFCAEAINKAQAETGEIKGHYLNATAGTCEEMMKRAVFARELGVPIVMHDYLTGGFTANTSLAHYCRDNGLLLHIHRAMHAVIDRQKNHGIHFRVLAKALRMSGGDHIHAGTVVGKLEGEREITLGFVDLLRDDFIEKDRSRGIYFTQDWVSLPGVLPVASGGIHVWHMPALTEIFGDDSVLQFGGGTLGHPWGNAPGAVANRVALEACVQARNEGRDLAREGNEIIREACKWSPELAAACEVWKAIKFEF</sequence>
<proteinExistence type="inferred from homology"/>
<name>RBL_GAREL</name>
<organism>
    <name type="scientific">Garrya elliptica</name>
    <name type="common">Wavyleaf silktassel</name>
    <dbReference type="NCBI Taxonomy" id="4288"/>
    <lineage>
        <taxon>Eukaryota</taxon>
        <taxon>Viridiplantae</taxon>
        <taxon>Streptophyta</taxon>
        <taxon>Embryophyta</taxon>
        <taxon>Tracheophyta</taxon>
        <taxon>Spermatophyta</taxon>
        <taxon>Magnoliopsida</taxon>
        <taxon>eudicotyledons</taxon>
        <taxon>Gunneridae</taxon>
        <taxon>Pentapetalae</taxon>
        <taxon>asterids</taxon>
        <taxon>lamiids</taxon>
        <taxon>Garryales</taxon>
        <taxon>Garryaceae</taxon>
        <taxon>Garrya</taxon>
    </lineage>
</organism>
<evidence type="ECO:0000255" key="1">
    <source>
        <dbReference type="HAMAP-Rule" id="MF_01338"/>
    </source>
</evidence>
<dbReference type="EC" id="4.1.1.39" evidence="1"/>
<dbReference type="EMBL" id="L01919">
    <property type="protein sequence ID" value="AAA84294.2"/>
    <property type="molecule type" value="Genomic_DNA"/>
</dbReference>
<dbReference type="PIR" id="T01641">
    <property type="entry name" value="T01641"/>
</dbReference>
<dbReference type="SMR" id="P28416"/>
<dbReference type="GO" id="GO:0009507">
    <property type="term" value="C:chloroplast"/>
    <property type="evidence" value="ECO:0007669"/>
    <property type="project" value="UniProtKB-SubCell"/>
</dbReference>
<dbReference type="GO" id="GO:0000287">
    <property type="term" value="F:magnesium ion binding"/>
    <property type="evidence" value="ECO:0007669"/>
    <property type="project" value="InterPro"/>
</dbReference>
<dbReference type="GO" id="GO:0004497">
    <property type="term" value="F:monooxygenase activity"/>
    <property type="evidence" value="ECO:0007669"/>
    <property type="project" value="UniProtKB-KW"/>
</dbReference>
<dbReference type="GO" id="GO:0016984">
    <property type="term" value="F:ribulose-bisphosphate carboxylase activity"/>
    <property type="evidence" value="ECO:0007669"/>
    <property type="project" value="UniProtKB-EC"/>
</dbReference>
<dbReference type="GO" id="GO:0009853">
    <property type="term" value="P:photorespiration"/>
    <property type="evidence" value="ECO:0007669"/>
    <property type="project" value="UniProtKB-KW"/>
</dbReference>
<dbReference type="GO" id="GO:0019253">
    <property type="term" value="P:reductive pentose-phosphate cycle"/>
    <property type="evidence" value="ECO:0007669"/>
    <property type="project" value="UniProtKB-KW"/>
</dbReference>
<dbReference type="CDD" id="cd08212">
    <property type="entry name" value="RuBisCO_large_I"/>
    <property type="match status" value="1"/>
</dbReference>
<dbReference type="FunFam" id="3.20.20.110:FF:000001">
    <property type="entry name" value="Ribulose bisphosphate carboxylase large chain"/>
    <property type="match status" value="1"/>
</dbReference>
<dbReference type="FunFam" id="3.30.70.150:FF:000001">
    <property type="entry name" value="Ribulose bisphosphate carboxylase large chain"/>
    <property type="match status" value="1"/>
</dbReference>
<dbReference type="Gene3D" id="3.20.20.110">
    <property type="entry name" value="Ribulose bisphosphate carboxylase, large subunit, C-terminal domain"/>
    <property type="match status" value="1"/>
</dbReference>
<dbReference type="Gene3D" id="3.30.70.150">
    <property type="entry name" value="RuBisCO large subunit, N-terminal domain"/>
    <property type="match status" value="1"/>
</dbReference>
<dbReference type="HAMAP" id="MF_01338">
    <property type="entry name" value="RuBisCO_L_type1"/>
    <property type="match status" value="1"/>
</dbReference>
<dbReference type="InterPro" id="IPR033966">
    <property type="entry name" value="RuBisCO"/>
</dbReference>
<dbReference type="InterPro" id="IPR020878">
    <property type="entry name" value="RuBisCo_large_chain_AS"/>
</dbReference>
<dbReference type="InterPro" id="IPR000685">
    <property type="entry name" value="RuBisCO_lsu_C"/>
</dbReference>
<dbReference type="InterPro" id="IPR036376">
    <property type="entry name" value="RuBisCO_lsu_C_sf"/>
</dbReference>
<dbReference type="InterPro" id="IPR017443">
    <property type="entry name" value="RuBisCO_lsu_fd_N"/>
</dbReference>
<dbReference type="InterPro" id="IPR036422">
    <property type="entry name" value="RuBisCO_lsu_N_sf"/>
</dbReference>
<dbReference type="InterPro" id="IPR020888">
    <property type="entry name" value="RuBisCO_lsuI"/>
</dbReference>
<dbReference type="NCBIfam" id="NF003252">
    <property type="entry name" value="PRK04208.1"/>
    <property type="match status" value="1"/>
</dbReference>
<dbReference type="PANTHER" id="PTHR42704">
    <property type="entry name" value="RIBULOSE BISPHOSPHATE CARBOXYLASE"/>
    <property type="match status" value="1"/>
</dbReference>
<dbReference type="PANTHER" id="PTHR42704:SF15">
    <property type="entry name" value="RIBULOSE BISPHOSPHATE CARBOXYLASE LARGE CHAIN"/>
    <property type="match status" value="1"/>
</dbReference>
<dbReference type="Pfam" id="PF00016">
    <property type="entry name" value="RuBisCO_large"/>
    <property type="match status" value="1"/>
</dbReference>
<dbReference type="Pfam" id="PF02788">
    <property type="entry name" value="RuBisCO_large_N"/>
    <property type="match status" value="1"/>
</dbReference>
<dbReference type="SFLD" id="SFLDG01052">
    <property type="entry name" value="RuBisCO"/>
    <property type="match status" value="1"/>
</dbReference>
<dbReference type="SFLD" id="SFLDS00014">
    <property type="entry name" value="RuBisCO"/>
    <property type="match status" value="1"/>
</dbReference>
<dbReference type="SFLD" id="SFLDG00301">
    <property type="entry name" value="RuBisCO-like_proteins"/>
    <property type="match status" value="1"/>
</dbReference>
<dbReference type="SUPFAM" id="SSF51649">
    <property type="entry name" value="RuBisCo, C-terminal domain"/>
    <property type="match status" value="1"/>
</dbReference>
<dbReference type="SUPFAM" id="SSF54966">
    <property type="entry name" value="RuBisCO, large subunit, small (N-terminal) domain"/>
    <property type="match status" value="1"/>
</dbReference>
<dbReference type="PROSITE" id="PS00157">
    <property type="entry name" value="RUBISCO_LARGE"/>
    <property type="match status" value="1"/>
</dbReference>
<protein>
    <recommendedName>
        <fullName evidence="1">Ribulose bisphosphate carboxylase large chain</fullName>
        <shortName evidence="1">RuBisCO large subunit</shortName>
        <ecNumber evidence="1">4.1.1.39</ecNumber>
    </recommendedName>
</protein>
<gene>
    <name evidence="1" type="primary">rbcL</name>
</gene>
<reference key="1">
    <citation type="journal article" date="1990" name="Proc. Natl. Acad. Sci. U.S.A.">
        <title>rbcL sequence divergence and phylogenetic relationships in Saxifragaceae sensu lato.</title>
        <authorList>
            <person name="Soltis D.E."/>
            <person name="Soltis P.S."/>
            <person name="Clegg M.T."/>
            <person name="Durbin M."/>
        </authorList>
    </citation>
    <scope>NUCLEOTIDE SEQUENCE [GENOMIC DNA]</scope>
</reference>
<reference key="2">
    <citation type="journal article" date="1992" name="Science">
        <title>Carnivorous plants: phylogeny and structural evolution.</title>
        <authorList>
            <person name="Albert V.A."/>
            <person name="Williams S.E."/>
            <person name="Chase M.W."/>
        </authorList>
    </citation>
    <scope>NUCLEOTIDE SEQUENCE [GENOMIC DNA]</scope>
</reference>